<dbReference type="PIR" id="S05037">
    <property type="entry name" value="S05037"/>
</dbReference>
<dbReference type="BMRB" id="P19890"/>
<dbReference type="SMR" id="P19890"/>
<dbReference type="PaxDb" id="10029-XP_007630956.1"/>
<dbReference type="eggNOG" id="ENOG502S4AQ">
    <property type="taxonomic scope" value="Eukaryota"/>
</dbReference>
<dbReference type="Proteomes" id="UP000694386">
    <property type="component" value="Unplaced"/>
</dbReference>
<dbReference type="Proteomes" id="UP001108280">
    <property type="component" value="Unplaced"/>
</dbReference>
<dbReference type="GO" id="GO:0005615">
    <property type="term" value="C:extracellular space"/>
    <property type="evidence" value="ECO:0007669"/>
    <property type="project" value="TreeGrafter"/>
</dbReference>
<dbReference type="GO" id="GO:0005179">
    <property type="term" value="F:hormone activity"/>
    <property type="evidence" value="ECO:0000250"/>
    <property type="project" value="UniProtKB"/>
</dbReference>
<dbReference type="GO" id="GO:0048018">
    <property type="term" value="F:receptor ligand activity"/>
    <property type="evidence" value="ECO:0000250"/>
    <property type="project" value="UniProtKB"/>
</dbReference>
<dbReference type="GO" id="GO:0097647">
    <property type="term" value="P:amylin receptor signaling pathway"/>
    <property type="evidence" value="ECO:0000250"/>
    <property type="project" value="UniProtKB"/>
</dbReference>
<dbReference type="Gene3D" id="6.10.250.2190">
    <property type="match status" value="1"/>
</dbReference>
<dbReference type="InterPro" id="IPR021117">
    <property type="entry name" value="Calcitonin-like"/>
</dbReference>
<dbReference type="InterPro" id="IPR021116">
    <property type="entry name" value="Calcitonin/adrenomedullin"/>
</dbReference>
<dbReference type="InterPro" id="IPR018360">
    <property type="entry name" value="Calcitonin_CS"/>
</dbReference>
<dbReference type="InterPro" id="IPR001693">
    <property type="entry name" value="Calcitonin_peptide-like"/>
</dbReference>
<dbReference type="InterPro" id="IPR000443">
    <property type="entry name" value="IAPP"/>
</dbReference>
<dbReference type="PANTHER" id="PTHR10505">
    <property type="entry name" value="CALCITONIN-RELATED"/>
    <property type="match status" value="1"/>
</dbReference>
<dbReference type="PANTHER" id="PTHR10505:SF4">
    <property type="entry name" value="ISLET AMYLOID POLYPEPTIDE"/>
    <property type="match status" value="1"/>
</dbReference>
<dbReference type="Pfam" id="PF00214">
    <property type="entry name" value="Calc_CGRP_IAPP"/>
    <property type="match status" value="1"/>
</dbReference>
<dbReference type="PRINTS" id="PR00818">
    <property type="entry name" value="ISLETAMYLOID"/>
</dbReference>
<dbReference type="SMART" id="SM00113">
    <property type="entry name" value="CALCITONIN"/>
    <property type="match status" value="1"/>
</dbReference>
<dbReference type="PROSITE" id="PS00258">
    <property type="entry name" value="CALCITONIN"/>
    <property type="match status" value="1"/>
</dbReference>
<feature type="peptide" id="PRO_0000044675" description="Islet amyloid polypeptide">
    <location>
        <begin position="1"/>
        <end position="37"/>
    </location>
</feature>
<feature type="modified residue" description="Tyrosine amide" evidence="1">
    <location>
        <position position="37"/>
    </location>
</feature>
<feature type="disulfide bond" evidence="3">
    <location>
        <begin position="2"/>
        <end position="7"/>
    </location>
</feature>
<protein>
    <recommendedName>
        <fullName>Islet amyloid polypeptide</fullName>
        <shortName>IAPP</shortName>
    </recommendedName>
    <alternativeName>
        <fullName>Amylin</fullName>
    </alternativeName>
</protein>
<sequence length="37" mass="3921">KCNTATCATQRLANFLVHSNNNLGPVLSPTNVGSNTY</sequence>
<accession>P19890</accession>
<reference key="1">
    <citation type="journal article" date="1989" name="FEBS Lett.">
        <title>Sequence divergence in a specific region of islet amyloid polypeptide (IAPP) explains differences in islet amyloid formation between species.</title>
        <authorList>
            <person name="Betsholtz C."/>
            <person name="Christmansson L."/>
            <person name="Engstroem U."/>
            <person name="Rorsman F."/>
            <person name="Svensson V."/>
            <person name="Johnson K.H."/>
            <person name="Westermark P."/>
        </authorList>
    </citation>
    <scope>NUCLEOTIDE SEQUENCE [MRNA]</scope>
    <scope>SYNTHESIS OF 20-29</scope>
</reference>
<gene>
    <name type="primary">IAPP</name>
</gene>
<keyword id="KW-0027">Amidation</keyword>
<keyword id="KW-0034">Amyloid</keyword>
<keyword id="KW-1015">Disulfide bond</keyword>
<keyword id="KW-0372">Hormone</keyword>
<keyword id="KW-0964">Secreted</keyword>
<organism>
    <name type="scientific">Cricetulus griseus</name>
    <name type="common">Chinese hamster</name>
    <name type="synonym">Cricetulus barabensis griseus</name>
    <dbReference type="NCBI Taxonomy" id="10029"/>
    <lineage>
        <taxon>Eukaryota</taxon>
        <taxon>Metazoa</taxon>
        <taxon>Chordata</taxon>
        <taxon>Craniata</taxon>
        <taxon>Vertebrata</taxon>
        <taxon>Euteleostomi</taxon>
        <taxon>Mammalia</taxon>
        <taxon>Eutheria</taxon>
        <taxon>Euarchontoglires</taxon>
        <taxon>Glires</taxon>
        <taxon>Rodentia</taxon>
        <taxon>Myomorpha</taxon>
        <taxon>Muroidea</taxon>
        <taxon>Cricetidae</taxon>
        <taxon>Cricetinae</taxon>
        <taxon>Cricetulus</taxon>
    </lineage>
</organism>
<proteinExistence type="inferred from homology"/>
<evidence type="ECO:0000250" key="1"/>
<evidence type="ECO:0000250" key="2">
    <source>
        <dbReference type="UniProtKB" id="P10997"/>
    </source>
</evidence>
<evidence type="ECO:0000250" key="3">
    <source>
        <dbReference type="UniProtKB" id="P12969"/>
    </source>
</evidence>
<evidence type="ECO:0000305" key="4"/>
<name>IAPP_CRIGR</name>
<comment type="function">
    <text evidence="2 3">Amylin/IAPP is a glucoregulatory peptide hormone that plays an important role in the regulation of energy homeostasis (By similarity). Selectively inhibits insulin-stimulated glucose utilization and glycogen deposition in muscle, while not affecting adipocyte glucose metabolism. IAPP function is mediated by the CALCR-RAMPs (AMYRs) receptor complexes. Amylin can also bind CALCR receptor in the absence of RAMPs, although it is more selective for AMYRs (By similarity).</text>
</comment>
<comment type="subunit">
    <text evidence="2 3">Can form homodimers. Interacts with IDE and INS. Interaction with INS inhibits homodimerization and fibril formation (By similarity).</text>
</comment>
<comment type="subcellular location">
    <subcellularLocation>
        <location evidence="2">Secreted</location>
    </subcellularLocation>
</comment>
<comment type="domain">
    <text evidence="1">The mature protein is largely unstructured in the absence of a cognate ligand, but contrary to the human protein, it does not easily form fibrillar aggregates.</text>
</comment>
<comment type="similarity">
    <text evidence="4">Belongs to the calcitonin family.</text>
</comment>